<organism>
    <name type="scientific">Desulforudis audaxviator (strain MP104C)</name>
    <dbReference type="NCBI Taxonomy" id="477974"/>
    <lineage>
        <taxon>Bacteria</taxon>
        <taxon>Bacillati</taxon>
        <taxon>Bacillota</taxon>
        <taxon>Clostridia</taxon>
        <taxon>Thermoanaerobacterales</taxon>
        <taxon>Candidatus Desulforudaceae</taxon>
        <taxon>Candidatus Desulforudis</taxon>
    </lineage>
</organism>
<gene>
    <name evidence="1" type="primary">dtd</name>
    <name type="ordered locus">Daud_0902</name>
</gene>
<protein>
    <recommendedName>
        <fullName evidence="1">D-aminoacyl-tRNA deacylase</fullName>
        <shortName evidence="1">DTD</shortName>
        <ecNumber evidence="1">3.1.1.96</ecNumber>
    </recommendedName>
    <alternativeName>
        <fullName evidence="1">Gly-tRNA(Ala) deacylase</fullName>
    </alternativeName>
</protein>
<name>DTD_DESAP</name>
<reference key="1">
    <citation type="submission" date="2007-10" db="EMBL/GenBank/DDBJ databases">
        <title>Complete sequence of chromosome of Desulforudis audaxviator MP104C.</title>
        <authorList>
            <person name="Copeland A."/>
            <person name="Lucas S."/>
            <person name="Lapidus A."/>
            <person name="Barry K."/>
            <person name="Glavina del Rio T."/>
            <person name="Dalin E."/>
            <person name="Tice H."/>
            <person name="Bruce D."/>
            <person name="Pitluck S."/>
            <person name="Lowry S.R."/>
            <person name="Larimer F."/>
            <person name="Land M.L."/>
            <person name="Hauser L."/>
            <person name="Kyrpides N."/>
            <person name="Ivanova N.N."/>
            <person name="Richardson P."/>
        </authorList>
    </citation>
    <scope>NUCLEOTIDE SEQUENCE [LARGE SCALE GENOMIC DNA]</scope>
    <source>
        <strain>MP104C</strain>
    </source>
</reference>
<evidence type="ECO:0000255" key="1">
    <source>
        <dbReference type="HAMAP-Rule" id="MF_00518"/>
    </source>
</evidence>
<dbReference type="EC" id="3.1.1.96" evidence="1"/>
<dbReference type="EMBL" id="CP000860">
    <property type="protein sequence ID" value="ACA59415.1"/>
    <property type="molecule type" value="Genomic_DNA"/>
</dbReference>
<dbReference type="RefSeq" id="WP_012302001.1">
    <property type="nucleotide sequence ID" value="NC_010424.1"/>
</dbReference>
<dbReference type="SMR" id="B1I337"/>
<dbReference type="STRING" id="477974.Daud_0902"/>
<dbReference type="KEGG" id="dau:Daud_0902"/>
<dbReference type="eggNOG" id="COG1490">
    <property type="taxonomic scope" value="Bacteria"/>
</dbReference>
<dbReference type="HOGENOM" id="CLU_076901_1_0_9"/>
<dbReference type="OrthoDB" id="9801395at2"/>
<dbReference type="Proteomes" id="UP000008544">
    <property type="component" value="Chromosome"/>
</dbReference>
<dbReference type="GO" id="GO:0005737">
    <property type="term" value="C:cytoplasm"/>
    <property type="evidence" value="ECO:0007669"/>
    <property type="project" value="UniProtKB-SubCell"/>
</dbReference>
<dbReference type="GO" id="GO:0051500">
    <property type="term" value="F:D-tyrosyl-tRNA(Tyr) deacylase activity"/>
    <property type="evidence" value="ECO:0007669"/>
    <property type="project" value="TreeGrafter"/>
</dbReference>
<dbReference type="GO" id="GO:0106026">
    <property type="term" value="F:Gly-tRNA(Ala) deacylase activity"/>
    <property type="evidence" value="ECO:0007669"/>
    <property type="project" value="UniProtKB-UniRule"/>
</dbReference>
<dbReference type="GO" id="GO:0043908">
    <property type="term" value="F:Ser(Gly)-tRNA(Ala) hydrolase activity"/>
    <property type="evidence" value="ECO:0007669"/>
    <property type="project" value="UniProtKB-UniRule"/>
</dbReference>
<dbReference type="GO" id="GO:0000049">
    <property type="term" value="F:tRNA binding"/>
    <property type="evidence" value="ECO:0007669"/>
    <property type="project" value="UniProtKB-UniRule"/>
</dbReference>
<dbReference type="GO" id="GO:0019478">
    <property type="term" value="P:D-amino acid catabolic process"/>
    <property type="evidence" value="ECO:0007669"/>
    <property type="project" value="UniProtKB-UniRule"/>
</dbReference>
<dbReference type="CDD" id="cd00563">
    <property type="entry name" value="Dtyr_deacylase"/>
    <property type="match status" value="1"/>
</dbReference>
<dbReference type="FunFam" id="3.50.80.10:FF:000001">
    <property type="entry name" value="D-aminoacyl-tRNA deacylase"/>
    <property type="match status" value="1"/>
</dbReference>
<dbReference type="Gene3D" id="3.50.80.10">
    <property type="entry name" value="D-tyrosyl-tRNA(Tyr) deacylase"/>
    <property type="match status" value="1"/>
</dbReference>
<dbReference type="HAMAP" id="MF_00518">
    <property type="entry name" value="Deacylase_Dtd"/>
    <property type="match status" value="1"/>
</dbReference>
<dbReference type="InterPro" id="IPR003732">
    <property type="entry name" value="Daa-tRNA_deacyls_DTD"/>
</dbReference>
<dbReference type="InterPro" id="IPR023509">
    <property type="entry name" value="DTD-like_sf"/>
</dbReference>
<dbReference type="NCBIfam" id="TIGR00256">
    <property type="entry name" value="D-aminoacyl-tRNA deacylase"/>
    <property type="match status" value="1"/>
</dbReference>
<dbReference type="PANTHER" id="PTHR10472:SF5">
    <property type="entry name" value="D-AMINOACYL-TRNA DEACYLASE 1"/>
    <property type="match status" value="1"/>
</dbReference>
<dbReference type="PANTHER" id="PTHR10472">
    <property type="entry name" value="D-TYROSYL-TRNA TYR DEACYLASE"/>
    <property type="match status" value="1"/>
</dbReference>
<dbReference type="Pfam" id="PF02580">
    <property type="entry name" value="Tyr_Deacylase"/>
    <property type="match status" value="1"/>
</dbReference>
<dbReference type="SUPFAM" id="SSF69500">
    <property type="entry name" value="DTD-like"/>
    <property type="match status" value="1"/>
</dbReference>
<sequence length="149" mass="16151">MRAVVQRVSRGVVTVGEETVGEIGHGFVVLLGVGREDTPDDAAYLAEKIANLRVFADENGKLNRSVLENGGSVLVVSQFTLFGDCRKGRRPGFSAAAPPERAVELYAEFVRRLAALGVPTAQGRFQEHMEVLIVNDGPVTLILDSRKLF</sequence>
<feature type="chain" id="PRO_1000127517" description="D-aminoacyl-tRNA deacylase">
    <location>
        <begin position="1"/>
        <end position="149"/>
    </location>
</feature>
<feature type="short sequence motif" description="Gly-cisPro motif, important for rejection of L-amino acids" evidence="1">
    <location>
        <begin position="137"/>
        <end position="138"/>
    </location>
</feature>
<proteinExistence type="inferred from homology"/>
<comment type="function">
    <text evidence="1">An aminoacyl-tRNA editing enzyme that deacylates mischarged D-aminoacyl-tRNAs. Also deacylates mischarged glycyl-tRNA(Ala), protecting cells against glycine mischarging by AlaRS. Acts via tRNA-based rather than protein-based catalysis; rejects L-amino acids rather than detecting D-amino acids in the active site. By recycling D-aminoacyl-tRNA to D-amino acids and free tRNA molecules, this enzyme counteracts the toxicity associated with the formation of D-aminoacyl-tRNA entities in vivo and helps enforce protein L-homochirality.</text>
</comment>
<comment type="catalytic activity">
    <reaction evidence="1">
        <text>glycyl-tRNA(Ala) + H2O = tRNA(Ala) + glycine + H(+)</text>
        <dbReference type="Rhea" id="RHEA:53744"/>
        <dbReference type="Rhea" id="RHEA-COMP:9657"/>
        <dbReference type="Rhea" id="RHEA-COMP:13640"/>
        <dbReference type="ChEBI" id="CHEBI:15377"/>
        <dbReference type="ChEBI" id="CHEBI:15378"/>
        <dbReference type="ChEBI" id="CHEBI:57305"/>
        <dbReference type="ChEBI" id="CHEBI:78442"/>
        <dbReference type="ChEBI" id="CHEBI:78522"/>
        <dbReference type="EC" id="3.1.1.96"/>
    </reaction>
</comment>
<comment type="catalytic activity">
    <reaction evidence="1">
        <text>a D-aminoacyl-tRNA + H2O = a tRNA + a D-alpha-amino acid + H(+)</text>
        <dbReference type="Rhea" id="RHEA:13953"/>
        <dbReference type="Rhea" id="RHEA-COMP:10123"/>
        <dbReference type="Rhea" id="RHEA-COMP:10124"/>
        <dbReference type="ChEBI" id="CHEBI:15377"/>
        <dbReference type="ChEBI" id="CHEBI:15378"/>
        <dbReference type="ChEBI" id="CHEBI:59871"/>
        <dbReference type="ChEBI" id="CHEBI:78442"/>
        <dbReference type="ChEBI" id="CHEBI:79333"/>
        <dbReference type="EC" id="3.1.1.96"/>
    </reaction>
</comment>
<comment type="subunit">
    <text evidence="1">Homodimer.</text>
</comment>
<comment type="subcellular location">
    <subcellularLocation>
        <location evidence="1">Cytoplasm</location>
    </subcellularLocation>
</comment>
<comment type="domain">
    <text evidence="1">A Gly-cisPro motif from one monomer fits into the active site of the other monomer to allow specific chiral rejection of L-amino acids.</text>
</comment>
<comment type="similarity">
    <text evidence="1">Belongs to the DTD family.</text>
</comment>
<keyword id="KW-0963">Cytoplasm</keyword>
<keyword id="KW-0378">Hydrolase</keyword>
<keyword id="KW-1185">Reference proteome</keyword>
<keyword id="KW-0694">RNA-binding</keyword>
<keyword id="KW-0820">tRNA-binding</keyword>
<accession>B1I337</accession>